<evidence type="ECO:0000250" key="1">
    <source>
        <dbReference type="UniProtKB" id="P45131"/>
    </source>
</evidence>
<evidence type="ECO:0000250" key="2">
    <source>
        <dbReference type="UniProtKB" id="Q10341"/>
    </source>
</evidence>
<evidence type="ECO:0000255" key="3"/>
<evidence type="ECO:0000256" key="4">
    <source>
        <dbReference type="SAM" id="MobiDB-lite"/>
    </source>
</evidence>
<evidence type="ECO:0000269" key="5">
    <source>
    </source>
</evidence>
<evidence type="ECO:0000303" key="6">
    <source>
    </source>
</evidence>
<evidence type="ECO:0000305" key="7"/>
<evidence type="ECO:0000305" key="8">
    <source>
    </source>
</evidence>
<evidence type="ECO:0000312" key="9">
    <source>
        <dbReference type="EMBL" id="SCN13867.1"/>
    </source>
</evidence>
<name>SST_EMEND</name>
<sequence>MSPLNGVARSLPRPFQAVARRPFRVAQPAVACPSNRRSFNHSRSLRSTGSQSPAPSPRDSSNPALSFPCLDAQEAKSALLSARSLGSGPEPSYTAGHHERFHSDEPLLLDWGGLLPEFDIAYETWGQLNEKKDNVILLHTGLSASSHAHSTEANPKPGWWEKFIGPGKTLDTDKYFVICTNVLGGCYGSTGPSTVDPSDGKKYATRFPILTIEDMVRAQFRLLDHLGVRKLYASVGSSMGGMQSLAAGVLFPERVGKIVSISGCARSHPYSIAMRHTQRQVLMMDPNWARGFYYDSIPPHSGMKLAREIATVTYRSGPEWEKRFGRKRADPSKQPALCPDFLIETYLDHAGEKFCLEYDANSLLYISKAMDLFDLGLTQQLATKKQRAEAQAKISSGTNTVNDASCSLTLPEQPYQEQPSASTSAEQSASASETGSAPNDLVAGLAPLKDHQVLVIGVASDILFPAWQQREIAETLIQAGNKTVEHIELGNDVSLFGHDTFLLDVKNVGGAVRKFLD</sequence>
<keyword id="KW-0012">Acyltransferase</keyword>
<keyword id="KW-0028">Amino-acid biosynthesis</keyword>
<keyword id="KW-0198">Cysteine biosynthesis</keyword>
<keyword id="KW-0496">Mitochondrion</keyword>
<keyword id="KW-0808">Transferase</keyword>
<keyword id="KW-0809">Transit peptide</keyword>
<organism>
    <name type="scientific">Emericella nidulans</name>
    <name type="common">Aspergillus nidulans</name>
    <dbReference type="NCBI Taxonomy" id="162425"/>
    <lineage>
        <taxon>Eukaryota</taxon>
        <taxon>Fungi</taxon>
        <taxon>Dikarya</taxon>
        <taxon>Ascomycota</taxon>
        <taxon>Pezizomycotina</taxon>
        <taxon>Eurotiomycetes</taxon>
        <taxon>Eurotiomycetidae</taxon>
        <taxon>Eurotiales</taxon>
        <taxon>Aspergillaceae</taxon>
        <taxon>Aspergillus</taxon>
        <taxon>Aspergillus subgen. Nidulantes</taxon>
    </lineage>
</organism>
<comment type="function">
    <text evidence="5">Transfers a succinyl group from succinyl-CoA to L-serine, forming succinyl-L-serine. Also has weak serine acetyl transferase activity and homoserine succinyl transferase activity.</text>
</comment>
<comment type="catalytic activity">
    <reaction evidence="5">
        <text>succinyl-CoA + L-serine = O-succinyl-L-serine + CoA</text>
        <dbReference type="Rhea" id="RHEA:52820"/>
        <dbReference type="ChEBI" id="CHEBI:33384"/>
        <dbReference type="ChEBI" id="CHEBI:57287"/>
        <dbReference type="ChEBI" id="CHEBI:57292"/>
        <dbReference type="ChEBI" id="CHEBI:136856"/>
    </reaction>
</comment>
<comment type="pathway">
    <text evidence="8">Amino-acid biosynthesis; L-cysteine biosynthesis; L-cysteine from L-serine: step 1/2.</text>
</comment>
<comment type="subcellular location">
    <subcellularLocation>
        <location evidence="2">Mitochondrion</location>
    </subcellularLocation>
</comment>
<comment type="similarity">
    <text evidence="7">Belongs to the AB hydrolase superfamily. MetX family.</text>
</comment>
<feature type="transit peptide" description="Mitochondrion" evidence="3">
    <location>
        <begin position="1"/>
        <end position="46"/>
    </location>
</feature>
<feature type="chain" id="PRO_0000441641" description="Serine O-succinyltransferase">
    <location>
        <begin position="47"/>
        <end position="517"/>
    </location>
</feature>
<feature type="domain" description="AB hydrolase-1" evidence="3">
    <location>
        <begin position="134"/>
        <end position="386"/>
    </location>
</feature>
<feature type="region of interest" description="Disordered" evidence="4">
    <location>
        <begin position="34"/>
        <end position="66"/>
    </location>
</feature>
<feature type="region of interest" description="Important for substrate specificity" evidence="8">
    <location>
        <begin position="141"/>
        <end position="144"/>
    </location>
</feature>
<feature type="region of interest" description="Disordered" evidence="4">
    <location>
        <begin position="413"/>
        <end position="436"/>
    </location>
</feature>
<feature type="compositionally biased region" description="Polar residues" evidence="4">
    <location>
        <begin position="45"/>
        <end position="64"/>
    </location>
</feature>
<feature type="compositionally biased region" description="Low complexity" evidence="4">
    <location>
        <begin position="416"/>
        <end position="436"/>
    </location>
</feature>
<feature type="active site" description="Nucleophile" evidence="1">
    <location>
        <position position="238"/>
    </location>
</feature>
<feature type="active site" evidence="1">
    <location>
        <position position="461"/>
    </location>
</feature>
<feature type="active site" evidence="1">
    <location>
        <position position="498"/>
    </location>
</feature>
<feature type="binding site" evidence="1">
    <location>
        <position position="307"/>
    </location>
    <ligand>
        <name>substrate</name>
    </ligand>
</feature>
<feature type="binding site" evidence="1">
    <location>
        <position position="499"/>
    </location>
    <ligand>
        <name>substrate</name>
    </ligand>
</feature>
<feature type="site" description="Important for acyl-CoA specificity" evidence="8">
    <location>
        <position position="275"/>
    </location>
</feature>
<dbReference type="EC" id="2.3.1.-" evidence="5"/>
<dbReference type="EMBL" id="LT613643">
    <property type="protein sequence ID" value="SCN13867.1"/>
    <property type="molecule type" value="Genomic_DNA"/>
</dbReference>
<dbReference type="SMR" id="A0A1D3PCM3"/>
<dbReference type="ESTHER" id="emeni-CYSC">
    <property type="family name" value="Homoserine_transacetylase"/>
</dbReference>
<dbReference type="UniPathway" id="UPA00136">
    <property type="reaction ID" value="UER00199"/>
</dbReference>
<dbReference type="GO" id="GO:0005739">
    <property type="term" value="C:mitochondrion"/>
    <property type="evidence" value="ECO:0007669"/>
    <property type="project" value="UniProtKB-SubCell"/>
</dbReference>
<dbReference type="GO" id="GO:0004414">
    <property type="term" value="F:homoserine O-acetyltransferase activity"/>
    <property type="evidence" value="ECO:0007669"/>
    <property type="project" value="TreeGrafter"/>
</dbReference>
<dbReference type="GO" id="GO:0160210">
    <property type="term" value="F:L-serine O-succinyltransferase activity"/>
    <property type="evidence" value="ECO:0007669"/>
    <property type="project" value="RHEA"/>
</dbReference>
<dbReference type="GO" id="GO:0009001">
    <property type="term" value="F:serine O-acetyltransferase activity"/>
    <property type="evidence" value="ECO:0007669"/>
    <property type="project" value="TreeGrafter"/>
</dbReference>
<dbReference type="GO" id="GO:0006535">
    <property type="term" value="P:cysteine biosynthetic process from serine"/>
    <property type="evidence" value="ECO:0007669"/>
    <property type="project" value="TreeGrafter"/>
</dbReference>
<dbReference type="GO" id="GO:0009092">
    <property type="term" value="P:homoserine metabolic process"/>
    <property type="evidence" value="ECO:0007669"/>
    <property type="project" value="TreeGrafter"/>
</dbReference>
<dbReference type="GO" id="GO:0009086">
    <property type="term" value="P:methionine biosynthetic process"/>
    <property type="evidence" value="ECO:0007669"/>
    <property type="project" value="TreeGrafter"/>
</dbReference>
<dbReference type="Gene3D" id="3.40.50.1820">
    <property type="entry name" value="alpha/beta hydrolase"/>
    <property type="match status" value="1"/>
</dbReference>
<dbReference type="HAMAP" id="MF_00296">
    <property type="entry name" value="MetX_acyltransf"/>
    <property type="match status" value="1"/>
</dbReference>
<dbReference type="InterPro" id="IPR000073">
    <property type="entry name" value="AB_hydrolase_1"/>
</dbReference>
<dbReference type="InterPro" id="IPR029058">
    <property type="entry name" value="AB_hydrolase_fold"/>
</dbReference>
<dbReference type="InterPro" id="IPR008220">
    <property type="entry name" value="HAT_MetX-like"/>
</dbReference>
<dbReference type="NCBIfam" id="TIGR01392">
    <property type="entry name" value="homoserO_Ac_trn"/>
    <property type="match status" value="1"/>
</dbReference>
<dbReference type="NCBIfam" id="NF001209">
    <property type="entry name" value="PRK00175.1"/>
    <property type="match status" value="1"/>
</dbReference>
<dbReference type="PANTHER" id="PTHR32268">
    <property type="entry name" value="HOMOSERINE O-ACETYLTRANSFERASE"/>
    <property type="match status" value="1"/>
</dbReference>
<dbReference type="PANTHER" id="PTHR32268:SF16">
    <property type="entry name" value="SERINE O-SUCCINYLTRANSFERASE"/>
    <property type="match status" value="1"/>
</dbReference>
<dbReference type="Pfam" id="PF00561">
    <property type="entry name" value="Abhydrolase_1"/>
    <property type="match status" value="1"/>
</dbReference>
<dbReference type="PIRSF" id="PIRSF000443">
    <property type="entry name" value="Homoser_Ac_trans"/>
    <property type="match status" value="1"/>
</dbReference>
<dbReference type="SUPFAM" id="SSF53474">
    <property type="entry name" value="alpha/beta-Hydrolases"/>
    <property type="match status" value="1"/>
</dbReference>
<gene>
    <name evidence="9" type="primary">CysA</name>
</gene>
<accession>A0A1D3PCM3</accession>
<proteinExistence type="evidence at protein level"/>
<protein>
    <recommendedName>
        <fullName evidence="7">Serine O-succinyltransferase</fullName>
        <shortName evidence="6">SST</shortName>
        <ecNumber evidence="5">2.3.1.-</ecNumber>
    </recommendedName>
</protein>
<reference key="1">
    <citation type="journal article" date="2017" name="Nat. Chem. Biol.">
        <title>Parallel evolution of non-homologous isofunctional enzymes in methionine biosynthesis.</title>
        <authorList>
            <person name="Bastard K."/>
            <person name="Perret A."/>
            <person name="Mariage A."/>
            <person name="Bessonnet T."/>
            <person name="Pinet-Turpault A."/>
            <person name="Petit J.L."/>
            <person name="Darii E."/>
            <person name="Bazire P."/>
            <person name="Vergne-Vaxelaire C."/>
            <person name="Brewee C."/>
            <person name="Debard A."/>
            <person name="Pellouin V."/>
            <person name="Besnard-Gonnet M."/>
            <person name="Artiguenave F."/>
            <person name="Medigue C."/>
            <person name="Vallenet D."/>
            <person name="Danchin A."/>
            <person name="Zaparucha A."/>
            <person name="Weissenbach J."/>
            <person name="Salanoubat M."/>
            <person name="de Berardinis V."/>
        </authorList>
    </citation>
    <scope>NUCLEOTIDE SEQUENCE [GENOMIC DNA]</scope>
    <scope>FUNCTION</scope>
    <scope>CATALYTIC ACTIVITY</scope>
    <scope>PATHWAY</scope>
    <source>
        <strain>ATCC 11267 / DSM 820</strain>
    </source>
</reference>